<dbReference type="EC" id="1.10.3.9" evidence="1"/>
<dbReference type="EMBL" id="CP000239">
    <property type="protein sequence ID" value="ABC99456.1"/>
    <property type="molecule type" value="Genomic_DNA"/>
</dbReference>
<dbReference type="EMBL" id="CP000239">
    <property type="protein sequence ID" value="ABD00000.1"/>
    <property type="molecule type" value="Genomic_DNA"/>
</dbReference>
<dbReference type="SMR" id="Q2JTJ2"/>
<dbReference type="STRING" id="321327.CYA_1274"/>
<dbReference type="KEGG" id="cya:CYA_1274"/>
<dbReference type="KEGG" id="cya:CYA_1849"/>
<dbReference type="eggNOG" id="ENOG502Z87P">
    <property type="taxonomic scope" value="Bacteria"/>
</dbReference>
<dbReference type="HOGENOM" id="CLU_054206_1_0_3"/>
<dbReference type="OrthoDB" id="505356at2"/>
<dbReference type="Proteomes" id="UP000008818">
    <property type="component" value="Chromosome"/>
</dbReference>
<dbReference type="GO" id="GO:0009523">
    <property type="term" value="C:photosystem II"/>
    <property type="evidence" value="ECO:0007669"/>
    <property type="project" value="UniProtKB-KW"/>
</dbReference>
<dbReference type="GO" id="GO:0031676">
    <property type="term" value="C:plasma membrane-derived thylakoid membrane"/>
    <property type="evidence" value="ECO:0007669"/>
    <property type="project" value="UniProtKB-SubCell"/>
</dbReference>
<dbReference type="GO" id="GO:0016168">
    <property type="term" value="F:chlorophyll binding"/>
    <property type="evidence" value="ECO:0007669"/>
    <property type="project" value="UniProtKB-UniRule"/>
</dbReference>
<dbReference type="GO" id="GO:0045156">
    <property type="term" value="F:electron transporter, transferring electrons within the cyclic electron transport pathway of photosynthesis activity"/>
    <property type="evidence" value="ECO:0007669"/>
    <property type="project" value="InterPro"/>
</dbReference>
<dbReference type="GO" id="GO:0005506">
    <property type="term" value="F:iron ion binding"/>
    <property type="evidence" value="ECO:0007669"/>
    <property type="project" value="UniProtKB-UniRule"/>
</dbReference>
<dbReference type="GO" id="GO:0016682">
    <property type="term" value="F:oxidoreductase activity, acting on diphenols and related substances as donors, oxygen as acceptor"/>
    <property type="evidence" value="ECO:0007669"/>
    <property type="project" value="UniProtKB-UniRule"/>
</dbReference>
<dbReference type="GO" id="GO:0010242">
    <property type="term" value="F:oxygen evolving activity"/>
    <property type="evidence" value="ECO:0007669"/>
    <property type="project" value="UniProtKB-EC"/>
</dbReference>
<dbReference type="GO" id="GO:0009772">
    <property type="term" value="P:photosynthetic electron transport in photosystem II"/>
    <property type="evidence" value="ECO:0007669"/>
    <property type="project" value="InterPro"/>
</dbReference>
<dbReference type="GO" id="GO:0009635">
    <property type="term" value="P:response to herbicide"/>
    <property type="evidence" value="ECO:0007669"/>
    <property type="project" value="UniProtKB-KW"/>
</dbReference>
<dbReference type="CDD" id="cd09289">
    <property type="entry name" value="Photosystem-II_D1"/>
    <property type="match status" value="1"/>
</dbReference>
<dbReference type="FunFam" id="1.20.85.10:FF:000002">
    <property type="entry name" value="Photosystem II protein D1"/>
    <property type="match status" value="1"/>
</dbReference>
<dbReference type="Gene3D" id="1.20.85.10">
    <property type="entry name" value="Photosystem II protein D1-like"/>
    <property type="match status" value="1"/>
</dbReference>
<dbReference type="HAMAP" id="MF_01379">
    <property type="entry name" value="PSII_PsbA_D1"/>
    <property type="match status" value="1"/>
</dbReference>
<dbReference type="InterPro" id="IPR055266">
    <property type="entry name" value="D1/D2"/>
</dbReference>
<dbReference type="InterPro" id="IPR036854">
    <property type="entry name" value="Photo_II_D1/D2_sf"/>
</dbReference>
<dbReference type="InterPro" id="IPR000484">
    <property type="entry name" value="Photo_RC_L/M"/>
</dbReference>
<dbReference type="InterPro" id="IPR055265">
    <property type="entry name" value="Photo_RC_L/M_CS"/>
</dbReference>
<dbReference type="InterPro" id="IPR005867">
    <property type="entry name" value="PSII_D1"/>
</dbReference>
<dbReference type="NCBIfam" id="TIGR01151">
    <property type="entry name" value="psbA"/>
    <property type="match status" value="1"/>
</dbReference>
<dbReference type="PANTHER" id="PTHR33149:SF12">
    <property type="entry name" value="PHOTOSYSTEM II D2 PROTEIN"/>
    <property type="match status" value="1"/>
</dbReference>
<dbReference type="PANTHER" id="PTHR33149">
    <property type="entry name" value="PHOTOSYSTEM II PROTEIN D1"/>
    <property type="match status" value="1"/>
</dbReference>
<dbReference type="Pfam" id="PF00124">
    <property type="entry name" value="Photo_RC"/>
    <property type="match status" value="1"/>
</dbReference>
<dbReference type="PRINTS" id="PR00256">
    <property type="entry name" value="REACTNCENTRE"/>
</dbReference>
<dbReference type="SUPFAM" id="SSF81483">
    <property type="entry name" value="Bacterial photosystem II reaction centre, L and M subunits"/>
    <property type="match status" value="1"/>
</dbReference>
<dbReference type="PROSITE" id="PS00244">
    <property type="entry name" value="REACTION_CENTER"/>
    <property type="match status" value="1"/>
</dbReference>
<accession>Q2JTJ2</accession>
<sequence>MTTVIQRRSTSNVWEQFCEWVTSTDNRLYIGWFGVLMIPTLLTATTCFIIAFIGAPPVDIDGIREPVSGSLLYGNNIITGAVVPSSAAIGLHFYPIWEAASLDEWLYNGGPYQLIVLHFLIGVFCYMGREWELSYRLGMRPWIAVAYSAPVAAATAVFLIYPIGQGSFSDGMPLGISGTFNFMLVFQAEHNILMHPFHQLGVAGVFGGALFSAMHGSLVTSSLIRETSEEESQNLGYKFGQEEETYNIVAAHGYFGRLIFQYASFNNSRSLHFFLAAWPVIGIWFTALGISIMAFNLNGFNFNQSIVDSNGRVVGTWADVLNRANLGMEVMHERNAHNFPLDLAAVEVAPAIRG</sequence>
<name>PSBA1_SYNJA</name>
<comment type="function">
    <text evidence="1">Photosystem II (PSII) is a light-driven water:plastoquinone oxidoreductase that uses light energy to abstract electrons from H(2)O, generating O(2) and a proton gradient subsequently used for ATP formation. It consists of a core antenna complex that captures photons, and an electron transfer chain that converts photonic excitation into a charge separation. The D1/D2 (PsbA/PsbD) reaction center heterodimer binds P680, the primary electron donor of PSII as well as several subsequent electron acceptors.</text>
</comment>
<comment type="catalytic activity">
    <reaction evidence="1">
        <text>2 a plastoquinone + 4 hnu + 2 H2O = 2 a plastoquinol + O2</text>
        <dbReference type="Rhea" id="RHEA:36359"/>
        <dbReference type="Rhea" id="RHEA-COMP:9561"/>
        <dbReference type="Rhea" id="RHEA-COMP:9562"/>
        <dbReference type="ChEBI" id="CHEBI:15377"/>
        <dbReference type="ChEBI" id="CHEBI:15379"/>
        <dbReference type="ChEBI" id="CHEBI:17757"/>
        <dbReference type="ChEBI" id="CHEBI:30212"/>
        <dbReference type="ChEBI" id="CHEBI:62192"/>
        <dbReference type="EC" id="1.10.3.9"/>
    </reaction>
</comment>
<comment type="cofactor">
    <text evidence="1">The D1/D2 heterodimer binds P680, chlorophylls that are the primary electron donor of PSII, and subsequent electron acceptors. It shares a non-heme iron and each subunit binds pheophytin, quinone, additional chlorophylls, carotenoids and lipids. D1 provides most of the ligands for the Mn4-Ca-O5 cluster of the oxygen-evolving complex (OEC). There is also a Cl(-1) ion associated with D1 and D2, which is required for oxygen evolution. The PSII complex binds additional chlorophylls, carotenoids and specific lipids.</text>
</comment>
<comment type="subunit">
    <text evidence="1">PSII is composed of 1 copy each of membrane proteins PsbA, PsbB, PsbC, PsbD, PsbE, PsbF, PsbH, PsbI, PsbJ, PsbK, PsbL, PsbM, PsbT, PsbX, PsbY, PsbZ, Psb30/Ycf12, peripheral proteins PsbO, CyanoQ (PsbQ), PsbU, PsbV and a large number of cofactors. It forms dimeric complexes.</text>
</comment>
<comment type="subcellular location">
    <subcellularLocation>
        <location evidence="1">Cellular thylakoid membrane</location>
        <topology evidence="1">Multi-pass membrane protein</topology>
    </subcellularLocation>
</comment>
<comment type="PTM">
    <text evidence="1">Tyr-161 forms a radical intermediate that is referred to as redox-active TyrZ, YZ or Y-Z.</text>
</comment>
<comment type="PTM">
    <text evidence="1">C-terminally processed by CtpA; processing is essential to allow assembly of the oxygen-evolving complex and thus photosynthetic growth.</text>
</comment>
<comment type="miscellaneous">
    <text evidence="1">Cyanobacteria usually contain more than 2 copies of the psbA gene.</text>
</comment>
<comment type="miscellaneous">
    <text evidence="1">2 of the reaction center chlorophylls (ChlD1 and ChlD2) are entirely coordinated by water.</text>
</comment>
<comment type="miscellaneous">
    <text evidence="1">Herbicides such as atrazine, BNT, diuron or ioxynil bind in the Q(B) binding site and block subsequent electron transfer.</text>
</comment>
<comment type="similarity">
    <text evidence="1">Belongs to the reaction center PufL/M/PsbA/D family.</text>
</comment>
<proteinExistence type="inferred from homology"/>
<organism>
    <name type="scientific">Synechococcus sp. (strain JA-3-3Ab)</name>
    <name type="common">Cyanobacteria bacterium Yellowstone A-Prime</name>
    <dbReference type="NCBI Taxonomy" id="321327"/>
    <lineage>
        <taxon>Bacteria</taxon>
        <taxon>Bacillati</taxon>
        <taxon>Cyanobacteriota</taxon>
        <taxon>Cyanophyceae</taxon>
        <taxon>Synechococcales</taxon>
        <taxon>Synechococcaceae</taxon>
        <taxon>Synechococcus</taxon>
    </lineage>
</organism>
<protein>
    <recommendedName>
        <fullName evidence="1">Photosystem II protein D1 1</fullName>
        <shortName evidence="1">PSII D1 protein 1</shortName>
        <ecNumber evidence="1">1.10.3.9</ecNumber>
    </recommendedName>
    <alternativeName>
        <fullName evidence="1">Photosystem II Q(B) protein 1</fullName>
    </alternativeName>
</protein>
<gene>
    <name evidence="1 2" type="primary">psbA1</name>
    <name type="ordered locus">CYA_1274</name>
</gene>
<gene>
    <name evidence="1 2" type="primary">psbA4</name>
    <name type="ordered locus">CYA_1849</name>
</gene>
<feature type="chain" id="PRO_0000316404" description="Photosystem II protein D1 1" evidence="1">
    <location>
        <begin position="1"/>
        <end position="344"/>
    </location>
</feature>
<feature type="propeptide" id="PRO_0000316405" evidence="1">
    <location>
        <begin position="345"/>
        <end position="354"/>
    </location>
</feature>
<feature type="transmembrane region" description="Helical" evidence="1">
    <location>
        <begin position="29"/>
        <end position="46"/>
    </location>
</feature>
<feature type="transmembrane region" description="Helical" evidence="1">
    <location>
        <begin position="118"/>
        <end position="133"/>
    </location>
</feature>
<feature type="transmembrane region" description="Helical" evidence="1">
    <location>
        <begin position="142"/>
        <end position="156"/>
    </location>
</feature>
<feature type="transmembrane region" description="Helical" evidence="1">
    <location>
        <begin position="197"/>
        <end position="218"/>
    </location>
</feature>
<feature type="transmembrane region" description="Helical" evidence="1">
    <location>
        <begin position="274"/>
        <end position="288"/>
    </location>
</feature>
<feature type="binding site" description="axial binding residue" evidence="1">
    <location>
        <position position="118"/>
    </location>
    <ligand>
        <name>chlorophyll a</name>
        <dbReference type="ChEBI" id="CHEBI:58416"/>
        <label>ChlzD1</label>
    </ligand>
    <ligandPart>
        <name>Mg</name>
        <dbReference type="ChEBI" id="CHEBI:25107"/>
    </ligandPart>
</feature>
<feature type="binding site" evidence="1">
    <location>
        <position position="126"/>
    </location>
    <ligand>
        <name>pheophytin a</name>
        <dbReference type="ChEBI" id="CHEBI:136840"/>
        <label>D1</label>
    </ligand>
</feature>
<feature type="binding site" evidence="1">
    <location>
        <position position="170"/>
    </location>
    <ligand>
        <name>[CaMn4O5] cluster</name>
        <dbReference type="ChEBI" id="CHEBI:189552"/>
    </ligand>
</feature>
<feature type="binding site" evidence="1">
    <location>
        <position position="189"/>
    </location>
    <ligand>
        <name>[CaMn4O5] cluster</name>
        <dbReference type="ChEBI" id="CHEBI:189552"/>
    </ligand>
</feature>
<feature type="binding site" description="axial binding residue" evidence="1">
    <location>
        <position position="198"/>
    </location>
    <ligand>
        <name>chlorophyll a</name>
        <dbReference type="ChEBI" id="CHEBI:58416"/>
        <label>PD1</label>
    </ligand>
    <ligandPart>
        <name>Mg</name>
        <dbReference type="ChEBI" id="CHEBI:25107"/>
    </ligandPart>
</feature>
<feature type="binding site" evidence="1">
    <location>
        <position position="215"/>
    </location>
    <ligand>
        <name>a quinone</name>
        <dbReference type="ChEBI" id="CHEBI:132124"/>
        <label>B</label>
    </ligand>
</feature>
<feature type="binding site" evidence="1">
    <location>
        <position position="215"/>
    </location>
    <ligand>
        <name>Fe cation</name>
        <dbReference type="ChEBI" id="CHEBI:24875"/>
        <note>ligand shared with heterodimeric partner</note>
    </ligand>
</feature>
<feature type="binding site" evidence="1">
    <location>
        <begin position="264"/>
        <end position="265"/>
    </location>
    <ligand>
        <name>a quinone</name>
        <dbReference type="ChEBI" id="CHEBI:132124"/>
        <label>B</label>
    </ligand>
</feature>
<feature type="binding site" evidence="1">
    <location>
        <position position="272"/>
    </location>
    <ligand>
        <name>Fe cation</name>
        <dbReference type="ChEBI" id="CHEBI:24875"/>
        <note>ligand shared with heterodimeric partner</note>
    </ligand>
</feature>
<feature type="binding site" evidence="1">
    <location>
        <position position="332"/>
    </location>
    <ligand>
        <name>[CaMn4O5] cluster</name>
        <dbReference type="ChEBI" id="CHEBI:189552"/>
    </ligand>
</feature>
<feature type="binding site" evidence="1">
    <location>
        <position position="333"/>
    </location>
    <ligand>
        <name>[CaMn4O5] cluster</name>
        <dbReference type="ChEBI" id="CHEBI:189552"/>
    </ligand>
</feature>
<feature type="binding site" evidence="1">
    <location>
        <position position="342"/>
    </location>
    <ligand>
        <name>[CaMn4O5] cluster</name>
        <dbReference type="ChEBI" id="CHEBI:189552"/>
    </ligand>
</feature>
<feature type="binding site" evidence="1">
    <location>
        <position position="344"/>
    </location>
    <ligand>
        <name>[CaMn4O5] cluster</name>
        <dbReference type="ChEBI" id="CHEBI:189552"/>
    </ligand>
</feature>
<feature type="site" description="Tyrosine radical intermediate" evidence="1">
    <location>
        <position position="161"/>
    </location>
</feature>
<feature type="site" description="Stabilizes free radical intermediate" evidence="1">
    <location>
        <position position="190"/>
    </location>
</feature>
<feature type="site" description="Cleavage; by CtpA" evidence="1">
    <location>
        <begin position="344"/>
        <end position="345"/>
    </location>
</feature>
<reference key="1">
    <citation type="journal article" date="2007" name="ISME J.">
        <title>Population level functional diversity in a microbial community revealed by comparative genomic and metagenomic analyses.</title>
        <authorList>
            <person name="Bhaya D."/>
            <person name="Grossman A.R."/>
            <person name="Steunou A.-S."/>
            <person name="Khuri N."/>
            <person name="Cohan F.M."/>
            <person name="Hamamura N."/>
            <person name="Melendrez M.C."/>
            <person name="Bateson M.M."/>
            <person name="Ward D.M."/>
            <person name="Heidelberg J.F."/>
        </authorList>
    </citation>
    <scope>NUCLEOTIDE SEQUENCE [LARGE SCALE GENOMIC DNA]</scope>
    <source>
        <strain>JA-3-3Ab</strain>
    </source>
</reference>
<keyword id="KW-0106">Calcium</keyword>
<keyword id="KW-0148">Chlorophyll</keyword>
<keyword id="KW-0157">Chromophore</keyword>
<keyword id="KW-0249">Electron transport</keyword>
<keyword id="KW-0359">Herbicide resistance</keyword>
<keyword id="KW-0408">Iron</keyword>
<keyword id="KW-0460">Magnesium</keyword>
<keyword id="KW-0464">Manganese</keyword>
<keyword id="KW-0472">Membrane</keyword>
<keyword id="KW-0479">Metal-binding</keyword>
<keyword id="KW-0560">Oxidoreductase</keyword>
<keyword id="KW-0602">Photosynthesis</keyword>
<keyword id="KW-0604">Photosystem II</keyword>
<keyword id="KW-0793">Thylakoid</keyword>
<keyword id="KW-0812">Transmembrane</keyword>
<keyword id="KW-1133">Transmembrane helix</keyword>
<keyword id="KW-0813">Transport</keyword>
<evidence type="ECO:0000255" key="1">
    <source>
        <dbReference type="HAMAP-Rule" id="MF_01379"/>
    </source>
</evidence>
<evidence type="ECO:0000305" key="2"/>